<name>PER50_ARATH</name>
<proteinExistence type="evidence at protein level"/>
<protein>
    <recommendedName>
        <fullName>Peroxidase 50</fullName>
        <shortName>Atperox P50</shortName>
        <ecNumber>1.11.1.7</ecNumber>
    </recommendedName>
    <alternativeName>
        <fullName>ATP9a</fullName>
    </alternativeName>
    <alternativeName>
        <fullName>PRXR2</fullName>
    </alternativeName>
</protein>
<accession>Q43731</accession>
<accession>Q96523</accession>
<accession>Q9SBA1</accession>
<gene>
    <name type="primary">PER50</name>
    <name type="synonym">P50</name>
    <name type="ordered locus">At4g37520</name>
    <name type="ORF">F19F18.10</name>
    <name type="ORF">F6G17.9</name>
</gene>
<comment type="function">
    <text>Removal of H(2)O(2), oxidation of toxic reductants, biosynthesis and degradation of lignin, suberization, auxin catabolism, response to environmental stresses such as wounding, pathogen attack and oxidative stress. These functions might be dependent on each isozyme/isoform in each plant tissue.</text>
</comment>
<comment type="function">
    <text>Exhibits a Ca(2+)-pectate binding affinity which could be interpreted in vivo as a specificity to interact with the pectic structure of the cell wall.</text>
</comment>
<comment type="catalytic activity">
    <reaction>
        <text>2 a phenolic donor + H2O2 = 2 a phenolic radical donor + 2 H2O</text>
        <dbReference type="Rhea" id="RHEA:56136"/>
        <dbReference type="ChEBI" id="CHEBI:15377"/>
        <dbReference type="ChEBI" id="CHEBI:16240"/>
        <dbReference type="ChEBI" id="CHEBI:139520"/>
        <dbReference type="ChEBI" id="CHEBI:139521"/>
        <dbReference type="EC" id="1.11.1.7"/>
    </reaction>
</comment>
<comment type="cofactor">
    <cofactor evidence="2">
        <name>heme b</name>
        <dbReference type="ChEBI" id="CHEBI:60344"/>
    </cofactor>
    <text evidence="2">Binds 1 heme b (iron(II)-protoporphyrin IX) group per subunit.</text>
</comment>
<comment type="cofactor">
    <cofactor evidence="2">
        <name>Ca(2+)</name>
        <dbReference type="ChEBI" id="CHEBI:29108"/>
    </cofactor>
    <text evidence="2">Binds 2 calcium ions per subunit.</text>
</comment>
<comment type="subcellular location">
    <subcellularLocation>
        <location evidence="2">Secreted</location>
    </subcellularLocation>
</comment>
<comment type="alternative products">
    <event type="alternative splicing"/>
    <isoform>
        <id>Q43731-1</id>
        <name>1</name>
        <sequence type="displayed"/>
    </isoform>
    <text>A number of isoforms are produced. According to EST sequences.</text>
</comment>
<comment type="tissue specificity">
    <text>Expressed in roots and leaves.</text>
</comment>
<comment type="developmental stage">
    <text evidence="5">Up-regulated during leaf development.</text>
</comment>
<comment type="induction">
    <text evidence="3 4">Enhanced expression in response of mechanical wounding. Induced either by incompatible fungal pathogen attack, or by methyl jasmonate, a plant defense-related signaling molecule. Expressed under a diurnal rhythm (circadian clock control).</text>
</comment>
<comment type="miscellaneous">
    <text>There are 73 peroxidase genes in A.thaliana.</text>
</comment>
<comment type="similarity">
    <text evidence="2">Belongs to the peroxidase family. Classical plant (class III) peroxidase subfamily.</text>
</comment>
<feature type="signal peptide" evidence="1">
    <location>
        <begin position="1"/>
        <end position="25"/>
    </location>
</feature>
<feature type="chain" id="PRO_0000023715" description="Peroxidase 50">
    <location>
        <begin position="26"/>
        <end position="329"/>
    </location>
</feature>
<feature type="active site" description="Proton acceptor" evidence="2">
    <location>
        <position position="67"/>
    </location>
</feature>
<feature type="binding site" evidence="2">
    <location>
        <position position="68"/>
    </location>
    <ligand>
        <name>Ca(2+)</name>
        <dbReference type="ChEBI" id="CHEBI:29108"/>
        <label>1</label>
    </ligand>
</feature>
<feature type="binding site" evidence="2">
    <location>
        <position position="71"/>
    </location>
    <ligand>
        <name>Ca(2+)</name>
        <dbReference type="ChEBI" id="CHEBI:29108"/>
        <label>1</label>
    </ligand>
</feature>
<feature type="binding site" evidence="2">
    <location>
        <position position="73"/>
    </location>
    <ligand>
        <name>Ca(2+)</name>
        <dbReference type="ChEBI" id="CHEBI:29108"/>
        <label>1</label>
    </ligand>
</feature>
<feature type="binding site" evidence="2">
    <location>
        <position position="75"/>
    </location>
    <ligand>
        <name>Ca(2+)</name>
        <dbReference type="ChEBI" id="CHEBI:29108"/>
        <label>1</label>
    </ligand>
</feature>
<feature type="binding site" evidence="2">
    <location>
        <position position="77"/>
    </location>
    <ligand>
        <name>Ca(2+)</name>
        <dbReference type="ChEBI" id="CHEBI:29108"/>
        <label>1</label>
    </ligand>
</feature>
<feature type="binding site" evidence="2">
    <location>
        <position position="167"/>
    </location>
    <ligand>
        <name>substrate</name>
    </ligand>
</feature>
<feature type="binding site" description="axial binding residue" evidence="2">
    <location>
        <position position="197"/>
    </location>
    <ligand>
        <name>heme b</name>
        <dbReference type="ChEBI" id="CHEBI:60344"/>
    </ligand>
    <ligandPart>
        <name>Fe</name>
        <dbReference type="ChEBI" id="CHEBI:18248"/>
    </ligandPart>
</feature>
<feature type="binding site" evidence="2">
    <location>
        <position position="198"/>
    </location>
    <ligand>
        <name>Ca(2+)</name>
        <dbReference type="ChEBI" id="CHEBI:29108"/>
        <label>2</label>
    </ligand>
</feature>
<feature type="binding site" evidence="2">
    <location>
        <position position="249"/>
    </location>
    <ligand>
        <name>Ca(2+)</name>
        <dbReference type="ChEBI" id="CHEBI:29108"/>
        <label>2</label>
    </ligand>
</feature>
<feature type="binding site" evidence="2">
    <location>
        <position position="252"/>
    </location>
    <ligand>
        <name>Ca(2+)</name>
        <dbReference type="ChEBI" id="CHEBI:29108"/>
        <label>2</label>
    </ligand>
</feature>
<feature type="binding site" evidence="2">
    <location>
        <position position="257"/>
    </location>
    <ligand>
        <name>Ca(2+)</name>
        <dbReference type="ChEBI" id="CHEBI:29108"/>
        <label>2</label>
    </ligand>
</feature>
<feature type="site" description="Transition state stabilizer" evidence="2">
    <location>
        <position position="63"/>
    </location>
</feature>
<feature type="glycosylation site" description="N-linked (GlcNAc...) asparagine" evidence="1">
    <location>
        <position position="215"/>
    </location>
</feature>
<feature type="disulfide bond" evidence="2">
    <location>
        <begin position="36"/>
        <end position="119"/>
    </location>
</feature>
<feature type="disulfide bond" evidence="2">
    <location>
        <begin position="69"/>
        <end position="74"/>
    </location>
</feature>
<feature type="disulfide bond" evidence="2">
    <location>
        <begin position="125"/>
        <end position="325"/>
    </location>
</feature>
<feature type="disulfide bond" evidence="2">
    <location>
        <begin position="204"/>
        <end position="236"/>
    </location>
</feature>
<feature type="sequence conflict" description="In Ref. 5; AAM63630." evidence="6" ref="5">
    <original>A</original>
    <variation>T</variation>
    <location>
        <position position="109"/>
    </location>
</feature>
<evidence type="ECO:0000255" key="1"/>
<evidence type="ECO:0000255" key="2">
    <source>
        <dbReference type="PROSITE-ProRule" id="PRU00297"/>
    </source>
</evidence>
<evidence type="ECO:0000269" key="3">
    <source>
    </source>
</evidence>
<evidence type="ECO:0000269" key="4">
    <source>
    </source>
</evidence>
<evidence type="ECO:0000269" key="5">
    <source ref="10"/>
</evidence>
<evidence type="ECO:0000305" key="6"/>
<dbReference type="EC" id="1.11.1.7"/>
<dbReference type="EMBL" id="X98314">
    <property type="protein sequence ID" value="CAA66958.1"/>
    <property type="molecule type" value="mRNA"/>
</dbReference>
<dbReference type="EMBL" id="AL035601">
    <property type="status" value="NOT_ANNOTATED_CDS"/>
    <property type="molecule type" value="Genomic_DNA"/>
</dbReference>
<dbReference type="EMBL" id="AL035605">
    <property type="protein sequence ID" value="CAB38291.1"/>
    <property type="molecule type" value="Genomic_DNA"/>
</dbReference>
<dbReference type="EMBL" id="AL161591">
    <property type="protein sequence ID" value="CAB80417.1"/>
    <property type="molecule type" value="Genomic_DNA"/>
</dbReference>
<dbReference type="EMBL" id="CP002687">
    <property type="protein sequence ID" value="AEE86804.1"/>
    <property type="molecule type" value="Genomic_DNA"/>
</dbReference>
<dbReference type="EMBL" id="AY062816">
    <property type="protein sequence ID" value="AAL32894.1"/>
    <property type="molecule type" value="mRNA"/>
</dbReference>
<dbReference type="EMBL" id="AY081577">
    <property type="protein sequence ID" value="AAM10139.1"/>
    <property type="molecule type" value="mRNA"/>
</dbReference>
<dbReference type="EMBL" id="AY086567">
    <property type="protein sequence ID" value="AAM63630.1"/>
    <property type="molecule type" value="mRNA"/>
</dbReference>
<dbReference type="EMBL" id="X98856">
    <property type="protein sequence ID" value="CAA67362.1"/>
    <property type="molecule type" value="Genomic_DNA"/>
</dbReference>
<dbReference type="EMBL" id="AJ006960">
    <property type="protein sequence ID" value="CAA07352.1"/>
    <property type="molecule type" value="Genomic_DNA"/>
</dbReference>
<dbReference type="EMBL" id="AF083762">
    <property type="protein sequence ID" value="AAN60320.1"/>
    <property type="molecule type" value="mRNA"/>
</dbReference>
<dbReference type="PIR" id="T04709">
    <property type="entry name" value="T04709"/>
</dbReference>
<dbReference type="RefSeq" id="NP_195468.1">
    <molecule id="Q43731-1"/>
    <property type="nucleotide sequence ID" value="NM_119916.4"/>
</dbReference>
<dbReference type="SMR" id="Q43731"/>
<dbReference type="BioGRID" id="15188">
    <property type="interactions" value="1"/>
</dbReference>
<dbReference type="FunCoup" id="Q43731">
    <property type="interactions" value="145"/>
</dbReference>
<dbReference type="IntAct" id="Q43731">
    <property type="interactions" value="1"/>
</dbReference>
<dbReference type="STRING" id="3702.Q43731"/>
<dbReference type="PeroxiBase" id="216">
    <property type="entry name" value="AtPrx50"/>
</dbReference>
<dbReference type="GlyCosmos" id="Q43731">
    <property type="glycosylation" value="1 site, No reported glycans"/>
</dbReference>
<dbReference type="GlyGen" id="Q43731">
    <property type="glycosylation" value="1 site"/>
</dbReference>
<dbReference type="iPTMnet" id="Q43731"/>
<dbReference type="PaxDb" id="3702-AT4G37520.1"/>
<dbReference type="ProteomicsDB" id="236782">
    <molecule id="Q43731-1"/>
</dbReference>
<dbReference type="EnsemblPlants" id="AT4G37520.1">
    <molecule id="Q43731-1"/>
    <property type="protein sequence ID" value="AT4G37520.1"/>
    <property type="gene ID" value="AT4G37520"/>
</dbReference>
<dbReference type="GeneID" id="829907"/>
<dbReference type="Gramene" id="AT4G37520.1">
    <molecule id="Q43731-1"/>
    <property type="protein sequence ID" value="AT4G37520.1"/>
    <property type="gene ID" value="AT4G37520"/>
</dbReference>
<dbReference type="KEGG" id="ath:AT4G37520"/>
<dbReference type="Araport" id="AT4G37520"/>
<dbReference type="TAIR" id="AT4G37520"/>
<dbReference type="eggNOG" id="ENOG502QV9M">
    <property type="taxonomic scope" value="Eukaryota"/>
</dbReference>
<dbReference type="HOGENOM" id="CLU_010543_0_3_1"/>
<dbReference type="InParanoid" id="Q43731"/>
<dbReference type="OMA" id="NTWANDS"/>
<dbReference type="OrthoDB" id="2113341at2759"/>
<dbReference type="PhylomeDB" id="Q43731"/>
<dbReference type="BioCyc" id="ARA:AT4G37520-MONOMER"/>
<dbReference type="PRO" id="PR:Q43731"/>
<dbReference type="Proteomes" id="UP000006548">
    <property type="component" value="Chromosome 4"/>
</dbReference>
<dbReference type="ExpressionAtlas" id="Q43731">
    <property type="expression patterns" value="baseline and differential"/>
</dbReference>
<dbReference type="GO" id="GO:0005737">
    <property type="term" value="C:cytoplasm"/>
    <property type="evidence" value="ECO:0007005"/>
    <property type="project" value="TAIR"/>
</dbReference>
<dbReference type="GO" id="GO:0005576">
    <property type="term" value="C:extracellular region"/>
    <property type="evidence" value="ECO:0007669"/>
    <property type="project" value="UniProtKB-SubCell"/>
</dbReference>
<dbReference type="GO" id="GO:0020037">
    <property type="term" value="F:heme binding"/>
    <property type="evidence" value="ECO:0007669"/>
    <property type="project" value="InterPro"/>
</dbReference>
<dbReference type="GO" id="GO:0140825">
    <property type="term" value="F:lactoperoxidase activity"/>
    <property type="evidence" value="ECO:0007669"/>
    <property type="project" value="UniProtKB-EC"/>
</dbReference>
<dbReference type="GO" id="GO:0046872">
    <property type="term" value="F:metal ion binding"/>
    <property type="evidence" value="ECO:0007669"/>
    <property type="project" value="UniProtKB-KW"/>
</dbReference>
<dbReference type="GO" id="GO:0042744">
    <property type="term" value="P:hydrogen peroxide catabolic process"/>
    <property type="evidence" value="ECO:0007669"/>
    <property type="project" value="UniProtKB-KW"/>
</dbReference>
<dbReference type="GO" id="GO:0006979">
    <property type="term" value="P:response to oxidative stress"/>
    <property type="evidence" value="ECO:0007669"/>
    <property type="project" value="InterPro"/>
</dbReference>
<dbReference type="GO" id="GO:0048511">
    <property type="term" value="P:rhythmic process"/>
    <property type="evidence" value="ECO:0007669"/>
    <property type="project" value="UniProtKB-KW"/>
</dbReference>
<dbReference type="CDD" id="cd00693">
    <property type="entry name" value="secretory_peroxidase"/>
    <property type="match status" value="1"/>
</dbReference>
<dbReference type="FunFam" id="1.10.420.10:FF:000001">
    <property type="entry name" value="Peroxidase"/>
    <property type="match status" value="1"/>
</dbReference>
<dbReference type="FunFam" id="1.10.520.10:FF:000008">
    <property type="entry name" value="Peroxidase"/>
    <property type="match status" value="1"/>
</dbReference>
<dbReference type="Gene3D" id="1.10.520.10">
    <property type="match status" value="1"/>
</dbReference>
<dbReference type="Gene3D" id="1.10.420.10">
    <property type="entry name" value="Peroxidase, domain 2"/>
    <property type="match status" value="1"/>
</dbReference>
<dbReference type="InterPro" id="IPR002016">
    <property type="entry name" value="Haem_peroxidase"/>
</dbReference>
<dbReference type="InterPro" id="IPR010255">
    <property type="entry name" value="Haem_peroxidase_sf"/>
</dbReference>
<dbReference type="InterPro" id="IPR000823">
    <property type="entry name" value="Peroxidase_pln"/>
</dbReference>
<dbReference type="InterPro" id="IPR019793">
    <property type="entry name" value="Peroxidases_heam-ligand_BS"/>
</dbReference>
<dbReference type="InterPro" id="IPR033905">
    <property type="entry name" value="Secretory_peroxidase"/>
</dbReference>
<dbReference type="PANTHER" id="PTHR31517">
    <property type="match status" value="1"/>
</dbReference>
<dbReference type="PANTHER" id="PTHR31517:SF82">
    <property type="entry name" value="PEROXIDASE 50-RELATED"/>
    <property type="match status" value="1"/>
</dbReference>
<dbReference type="Pfam" id="PF00141">
    <property type="entry name" value="peroxidase"/>
    <property type="match status" value="1"/>
</dbReference>
<dbReference type="PRINTS" id="PR00458">
    <property type="entry name" value="PEROXIDASE"/>
</dbReference>
<dbReference type="PRINTS" id="PR00461">
    <property type="entry name" value="PLPEROXIDASE"/>
</dbReference>
<dbReference type="SUPFAM" id="SSF48113">
    <property type="entry name" value="Heme-dependent peroxidases"/>
    <property type="match status" value="1"/>
</dbReference>
<dbReference type="PROSITE" id="PS00435">
    <property type="entry name" value="PEROXIDASE_1"/>
    <property type="match status" value="1"/>
</dbReference>
<dbReference type="PROSITE" id="PS50873">
    <property type="entry name" value="PEROXIDASE_4"/>
    <property type="match status" value="1"/>
</dbReference>
<sequence>MVVVNKTNLLLLLLSLCLTLDLSSAQLRRNFYAGSCPNVEQIVRNAVQKKVQQTFTTIPATLRLYFHDCFVNGCDASVMIASTNNNKAEKDHEENLSLAGDGFDTVIKAKEALDAVPNCRNKVSCADILTMATRDVVNLAGGPQYDVELGRLDGLSSTAASVGGKLPHPTDDVNKLTSLFAKNGLSLNDMIALSGAHTLGFAHCTKVFNRIYTFNKTTKVDPTVNKDYVTELKASCPRNIDPRVAINMDPTTPRQFDNVYYKNLQQGKGLFTSDQVLFTDRRSKPTVDLWANNGQLFNQAFINSMIKLGRVGVKTGSNGNIRRDCGAFN</sequence>
<organism>
    <name type="scientific">Arabidopsis thaliana</name>
    <name type="common">Mouse-ear cress</name>
    <dbReference type="NCBI Taxonomy" id="3702"/>
    <lineage>
        <taxon>Eukaryota</taxon>
        <taxon>Viridiplantae</taxon>
        <taxon>Streptophyta</taxon>
        <taxon>Embryophyta</taxon>
        <taxon>Tracheophyta</taxon>
        <taxon>Spermatophyta</taxon>
        <taxon>Magnoliopsida</taxon>
        <taxon>eudicotyledons</taxon>
        <taxon>Gunneridae</taxon>
        <taxon>Pentapetalae</taxon>
        <taxon>rosids</taxon>
        <taxon>malvids</taxon>
        <taxon>Brassicales</taxon>
        <taxon>Brassicaceae</taxon>
        <taxon>Camelineae</taxon>
        <taxon>Arabidopsis</taxon>
    </lineage>
</organism>
<reference key="1">
    <citation type="online journal article" date="1996" name="Plant Gene Register">
        <title>Eleven cDNA clones from Arabidopsis thaliana encoding isoperoxidases.</title>
        <authorList>
            <person name="Capelli N."/>
            <person name="Tognolli M."/>
            <person name="Flach J."/>
            <person name="Overney S."/>
            <person name="Penel C."/>
            <person name="Greppin H."/>
            <person name="Simon P."/>
        </authorList>
        <locator>PGR96-066</locator>
    </citation>
    <scope>NUCLEOTIDE SEQUENCE</scope>
    <source>
        <strain>cv. Columbia</strain>
    </source>
</reference>
<reference key="2">
    <citation type="journal article" date="1999" name="Nature">
        <title>Sequence and analysis of chromosome 4 of the plant Arabidopsis thaliana.</title>
        <authorList>
            <person name="Mayer K.F.X."/>
            <person name="Schueller C."/>
            <person name="Wambutt R."/>
            <person name="Murphy G."/>
            <person name="Volckaert G."/>
            <person name="Pohl T."/>
            <person name="Duesterhoeft A."/>
            <person name="Stiekema W."/>
            <person name="Entian K.-D."/>
            <person name="Terryn N."/>
            <person name="Harris B."/>
            <person name="Ansorge W."/>
            <person name="Brandt P."/>
            <person name="Grivell L.A."/>
            <person name="Rieger M."/>
            <person name="Weichselgartner M."/>
            <person name="de Simone V."/>
            <person name="Obermaier B."/>
            <person name="Mache R."/>
            <person name="Mueller M."/>
            <person name="Kreis M."/>
            <person name="Delseny M."/>
            <person name="Puigdomenech P."/>
            <person name="Watson M."/>
            <person name="Schmidtheini T."/>
            <person name="Reichert B."/>
            <person name="Portetelle D."/>
            <person name="Perez-Alonso M."/>
            <person name="Boutry M."/>
            <person name="Bancroft I."/>
            <person name="Vos P."/>
            <person name="Hoheisel J."/>
            <person name="Zimmermann W."/>
            <person name="Wedler H."/>
            <person name="Ridley P."/>
            <person name="Langham S.-A."/>
            <person name="McCullagh B."/>
            <person name="Bilham L."/>
            <person name="Robben J."/>
            <person name="van der Schueren J."/>
            <person name="Grymonprez B."/>
            <person name="Chuang Y.-J."/>
            <person name="Vandenbussche F."/>
            <person name="Braeken M."/>
            <person name="Weltjens I."/>
            <person name="Voet M."/>
            <person name="Bastiaens I."/>
            <person name="Aert R."/>
            <person name="Defoor E."/>
            <person name="Weitzenegger T."/>
            <person name="Bothe G."/>
            <person name="Ramsperger U."/>
            <person name="Hilbert H."/>
            <person name="Braun M."/>
            <person name="Holzer E."/>
            <person name="Brandt A."/>
            <person name="Peters S."/>
            <person name="van Staveren M."/>
            <person name="Dirkse W."/>
            <person name="Mooijman P."/>
            <person name="Klein Lankhorst R."/>
            <person name="Rose M."/>
            <person name="Hauf J."/>
            <person name="Koetter P."/>
            <person name="Berneiser S."/>
            <person name="Hempel S."/>
            <person name="Feldpausch M."/>
            <person name="Lamberth S."/>
            <person name="Van den Daele H."/>
            <person name="De Keyser A."/>
            <person name="Buysshaert C."/>
            <person name="Gielen J."/>
            <person name="Villarroel R."/>
            <person name="De Clercq R."/>
            <person name="van Montagu M."/>
            <person name="Rogers J."/>
            <person name="Cronin A."/>
            <person name="Quail M.A."/>
            <person name="Bray-Allen S."/>
            <person name="Clark L."/>
            <person name="Doggett J."/>
            <person name="Hall S."/>
            <person name="Kay M."/>
            <person name="Lennard N."/>
            <person name="McLay K."/>
            <person name="Mayes R."/>
            <person name="Pettett A."/>
            <person name="Rajandream M.A."/>
            <person name="Lyne M."/>
            <person name="Benes V."/>
            <person name="Rechmann S."/>
            <person name="Borkova D."/>
            <person name="Bloecker H."/>
            <person name="Scharfe M."/>
            <person name="Grimm M."/>
            <person name="Loehnert T.-H."/>
            <person name="Dose S."/>
            <person name="de Haan M."/>
            <person name="Maarse A.C."/>
            <person name="Schaefer M."/>
            <person name="Mueller-Auer S."/>
            <person name="Gabel C."/>
            <person name="Fuchs M."/>
            <person name="Fartmann B."/>
            <person name="Granderath K."/>
            <person name="Dauner D."/>
            <person name="Herzl A."/>
            <person name="Neumann S."/>
            <person name="Argiriou A."/>
            <person name="Vitale D."/>
            <person name="Liguori R."/>
            <person name="Piravandi E."/>
            <person name="Massenet O."/>
            <person name="Quigley F."/>
            <person name="Clabauld G."/>
            <person name="Muendlein A."/>
            <person name="Felber R."/>
            <person name="Schnabl S."/>
            <person name="Hiller R."/>
            <person name="Schmidt W."/>
            <person name="Lecharny A."/>
            <person name="Aubourg S."/>
            <person name="Chefdor F."/>
            <person name="Cooke R."/>
            <person name="Berger C."/>
            <person name="Monfort A."/>
            <person name="Casacuberta E."/>
            <person name="Gibbons T."/>
            <person name="Weber N."/>
            <person name="Vandenbol M."/>
            <person name="Bargues M."/>
            <person name="Terol J."/>
            <person name="Torres A."/>
            <person name="Perez-Perez A."/>
            <person name="Purnelle B."/>
            <person name="Bent E."/>
            <person name="Johnson S."/>
            <person name="Tacon D."/>
            <person name="Jesse T."/>
            <person name="Heijnen L."/>
            <person name="Schwarz S."/>
            <person name="Scholler P."/>
            <person name="Heber S."/>
            <person name="Francs P."/>
            <person name="Bielke C."/>
            <person name="Frishman D."/>
            <person name="Haase D."/>
            <person name="Lemcke K."/>
            <person name="Mewes H.-W."/>
            <person name="Stocker S."/>
            <person name="Zaccaria P."/>
            <person name="Bevan M."/>
            <person name="Wilson R.K."/>
            <person name="de la Bastide M."/>
            <person name="Habermann K."/>
            <person name="Parnell L."/>
            <person name="Dedhia N."/>
            <person name="Gnoj L."/>
            <person name="Schutz K."/>
            <person name="Huang E."/>
            <person name="Spiegel L."/>
            <person name="Sekhon M."/>
            <person name="Murray J."/>
            <person name="Sheet P."/>
            <person name="Cordes M."/>
            <person name="Abu-Threideh J."/>
            <person name="Stoneking T."/>
            <person name="Kalicki J."/>
            <person name="Graves T."/>
            <person name="Harmon G."/>
            <person name="Edwards J."/>
            <person name="Latreille P."/>
            <person name="Courtney L."/>
            <person name="Cloud J."/>
            <person name="Abbott A."/>
            <person name="Scott K."/>
            <person name="Johnson D."/>
            <person name="Minx P."/>
            <person name="Bentley D."/>
            <person name="Fulton B."/>
            <person name="Miller N."/>
            <person name="Greco T."/>
            <person name="Kemp K."/>
            <person name="Kramer J."/>
            <person name="Fulton L."/>
            <person name="Mardis E."/>
            <person name="Dante M."/>
            <person name="Pepin K."/>
            <person name="Hillier L.W."/>
            <person name="Nelson J."/>
            <person name="Spieth J."/>
            <person name="Ryan E."/>
            <person name="Andrews S."/>
            <person name="Geisel C."/>
            <person name="Layman D."/>
            <person name="Du H."/>
            <person name="Ali J."/>
            <person name="Berghoff A."/>
            <person name="Jones K."/>
            <person name="Drone K."/>
            <person name="Cotton M."/>
            <person name="Joshu C."/>
            <person name="Antonoiu B."/>
            <person name="Zidanic M."/>
            <person name="Strong C."/>
            <person name="Sun H."/>
            <person name="Lamar B."/>
            <person name="Yordan C."/>
            <person name="Ma P."/>
            <person name="Zhong J."/>
            <person name="Preston R."/>
            <person name="Vil D."/>
            <person name="Shekher M."/>
            <person name="Matero A."/>
            <person name="Shah R."/>
            <person name="Swaby I.K."/>
            <person name="O'Shaughnessy A."/>
            <person name="Rodriguez M."/>
            <person name="Hoffman J."/>
            <person name="Till S."/>
            <person name="Granat S."/>
            <person name="Shohdy N."/>
            <person name="Hasegawa A."/>
            <person name="Hameed A."/>
            <person name="Lodhi M."/>
            <person name="Johnson A."/>
            <person name="Chen E."/>
            <person name="Marra M.A."/>
            <person name="Martienssen R."/>
            <person name="McCombie W.R."/>
        </authorList>
    </citation>
    <scope>NUCLEOTIDE SEQUENCE [LARGE SCALE GENOMIC DNA]</scope>
    <source>
        <strain>cv. Columbia</strain>
    </source>
</reference>
<reference key="3">
    <citation type="journal article" date="2017" name="Plant J.">
        <title>Araport11: a complete reannotation of the Arabidopsis thaliana reference genome.</title>
        <authorList>
            <person name="Cheng C.Y."/>
            <person name="Krishnakumar V."/>
            <person name="Chan A.P."/>
            <person name="Thibaud-Nissen F."/>
            <person name="Schobel S."/>
            <person name="Town C.D."/>
        </authorList>
    </citation>
    <scope>GENOME REANNOTATION</scope>
    <source>
        <strain>cv. Columbia</strain>
    </source>
</reference>
<reference key="4">
    <citation type="journal article" date="2003" name="Science">
        <title>Empirical analysis of transcriptional activity in the Arabidopsis genome.</title>
        <authorList>
            <person name="Yamada K."/>
            <person name="Lim J."/>
            <person name="Dale J.M."/>
            <person name="Chen H."/>
            <person name="Shinn P."/>
            <person name="Palm C.J."/>
            <person name="Southwick A.M."/>
            <person name="Wu H.C."/>
            <person name="Kim C.J."/>
            <person name="Nguyen M."/>
            <person name="Pham P.K."/>
            <person name="Cheuk R.F."/>
            <person name="Karlin-Newmann G."/>
            <person name="Liu S.X."/>
            <person name="Lam B."/>
            <person name="Sakano H."/>
            <person name="Wu T."/>
            <person name="Yu G."/>
            <person name="Miranda M."/>
            <person name="Quach H.L."/>
            <person name="Tripp M."/>
            <person name="Chang C.H."/>
            <person name="Lee J.M."/>
            <person name="Toriumi M.J."/>
            <person name="Chan M.M."/>
            <person name="Tang C.C."/>
            <person name="Onodera C.S."/>
            <person name="Deng J.M."/>
            <person name="Akiyama K."/>
            <person name="Ansari Y."/>
            <person name="Arakawa T."/>
            <person name="Banh J."/>
            <person name="Banno F."/>
            <person name="Bowser L."/>
            <person name="Brooks S.Y."/>
            <person name="Carninci P."/>
            <person name="Chao Q."/>
            <person name="Choy N."/>
            <person name="Enju A."/>
            <person name="Goldsmith A.D."/>
            <person name="Gurjal M."/>
            <person name="Hansen N.F."/>
            <person name="Hayashizaki Y."/>
            <person name="Johnson-Hopson C."/>
            <person name="Hsuan V.W."/>
            <person name="Iida K."/>
            <person name="Karnes M."/>
            <person name="Khan S."/>
            <person name="Koesema E."/>
            <person name="Ishida J."/>
            <person name="Jiang P.X."/>
            <person name="Jones T."/>
            <person name="Kawai J."/>
            <person name="Kamiya A."/>
            <person name="Meyers C."/>
            <person name="Nakajima M."/>
            <person name="Narusaka M."/>
            <person name="Seki M."/>
            <person name="Sakurai T."/>
            <person name="Satou M."/>
            <person name="Tamse R."/>
            <person name="Vaysberg M."/>
            <person name="Wallender E.K."/>
            <person name="Wong C."/>
            <person name="Yamamura Y."/>
            <person name="Yuan S."/>
            <person name="Shinozaki K."/>
            <person name="Davis R.W."/>
            <person name="Theologis A."/>
            <person name="Ecker J.R."/>
        </authorList>
    </citation>
    <scope>NUCLEOTIDE SEQUENCE [LARGE SCALE MRNA]</scope>
    <source>
        <strain>cv. Columbia</strain>
    </source>
</reference>
<reference key="5">
    <citation type="submission" date="2002-03" db="EMBL/GenBank/DDBJ databases">
        <title>Full-length cDNA from Arabidopsis thaliana.</title>
        <authorList>
            <person name="Brover V.V."/>
            <person name="Troukhan M.E."/>
            <person name="Alexandrov N.A."/>
            <person name="Lu Y.-P."/>
            <person name="Flavell R.B."/>
            <person name="Feldmann K.A."/>
        </authorList>
    </citation>
    <scope>NUCLEOTIDE SEQUENCE [LARGE SCALE MRNA]</scope>
</reference>
<reference key="6">
    <citation type="journal article" date="1998" name="Biochim. Biophys. Acta">
        <title>Analysis of two incompletely spliced Arabidopsis cDNAs encoding novel types of peroxidase.</title>
        <authorList>
            <person name="Justesen A.F."/>
            <person name="Jespersen H.M."/>
            <person name="Welinder K.G."/>
        </authorList>
    </citation>
    <scope>NUCLEOTIDE SEQUENCE [GENOMIC DNA] OF 18-329</scope>
    <source>
        <strain>cv. Columbia</strain>
        <tissue>Leaf</tissue>
    </source>
</reference>
<reference key="7">
    <citation type="submission" date="1998-08" db="EMBL/GenBank/DDBJ databases">
        <title>Signal peptide selection derived cDNAs from Arabidopsis thaliana leaves and guard cells.</title>
        <authorList>
            <person name="Stracke R."/>
            <person name="Palme K."/>
        </authorList>
    </citation>
    <scope>NUCLEOTIDE SEQUENCE [LARGE SCALE MRNA] OF 1-206</scope>
</reference>
<reference key="8">
    <citation type="journal article" date="1998" name="FEBS Lett.">
        <title>Computational analyses and annotations of the Arabidopsis peroxidase gene family.</title>
        <authorList>
            <person name="Oestergaard L."/>
            <person name="Pedersen A.G."/>
            <person name="Jespersen H.M."/>
            <person name="Brunak S."/>
            <person name="Welinder K.G."/>
        </authorList>
    </citation>
    <scope>CHARACTERIZATION</scope>
    <source>
        <strain>cv. Columbia</strain>
    </source>
</reference>
<reference key="9">
    <citation type="journal article" date="2002" name="J. Plant Physiol.">
        <title>Identification and characterization of Ca(2+)-pectate binding peroxidases in Arabidopsis thaliana.</title>
        <authorList>
            <person name="Dunand C."/>
            <person name="Tognolli M."/>
            <person name="Overney S."/>
            <person name="von Tobel L."/>
            <person name="de Meyer M."/>
            <person name="Simon P."/>
            <person name="Penel C."/>
        </authorList>
    </citation>
    <scope>CHARACTERIZATION</scope>
    <source>
        <strain>cv. Columbia</strain>
    </source>
</reference>
<reference key="10">
    <citation type="journal article" date="2001" name="Plant Physiol. Biochem.">
        <title>Toward elucidating the global gene expression patterns of developing Arabidopsis: parallel analysis of 8300 genes by a high-density oligonucleotide probe array.</title>
        <authorList>
            <person name="Zhu T."/>
            <person name="Budworth P."/>
            <person name="Han B."/>
            <person name="Brown D."/>
            <person name="Chang H.-S."/>
            <person name="Zou G."/>
            <person name="Wang X."/>
        </authorList>
    </citation>
    <scope>DEVELOPMENTAL STAGE</scope>
    <source>
        <strain>cv. Columbia</strain>
    </source>
</reference>
<reference key="11">
    <citation type="journal article" date="2000" name="Proc. Natl. Acad. Sci. U.S.A.">
        <title>Coordinated plant defense responses in Arabidopsis revealed by microarray analysis.</title>
        <authorList>
            <person name="Schenk P.M."/>
            <person name="Kazan K."/>
            <person name="Wilson I."/>
            <person name="Anderson J.P."/>
            <person name="Richmond T."/>
            <person name="Somerville S.C."/>
            <person name="Manners J.M."/>
        </authorList>
    </citation>
    <scope>INDUCTION</scope>
    <source>
        <strain>cv. Columbia</strain>
    </source>
</reference>
<reference key="12">
    <citation type="journal article" date="2001" name="Plant Cell">
        <title>Microarray analysis of diurnal and circadian-regulated genes in Arabidopsis.</title>
        <authorList>
            <person name="Schaffer R."/>
            <person name="Landgraf J."/>
            <person name="Accerbi M."/>
            <person name="Simon V."/>
            <person name="Larson M."/>
            <person name="Wisman E."/>
        </authorList>
    </citation>
    <scope>INDUCTION</scope>
    <source>
        <strain>cv. Columbia</strain>
    </source>
</reference>
<reference key="13">
    <citation type="journal article" date="2002" name="Gene">
        <title>Analysis and expression of the class III peroxidase large gene family in Arabidopsis thaliana.</title>
        <authorList>
            <person name="Tognolli M."/>
            <person name="Penel C."/>
            <person name="Greppin H."/>
            <person name="Simon P."/>
        </authorList>
    </citation>
    <scope>GENE FAMILY ORGANIZATION</scope>
    <scope>NOMENCLATURE</scope>
    <source>
        <strain>cv. Columbia</strain>
    </source>
</reference>
<keyword id="KW-0025">Alternative splicing</keyword>
<keyword id="KW-0090">Biological rhythms</keyword>
<keyword id="KW-0106">Calcium</keyword>
<keyword id="KW-1015">Disulfide bond</keyword>
<keyword id="KW-0325">Glycoprotein</keyword>
<keyword id="KW-0349">Heme</keyword>
<keyword id="KW-0376">Hydrogen peroxide</keyword>
<keyword id="KW-0408">Iron</keyword>
<keyword id="KW-0479">Metal-binding</keyword>
<keyword id="KW-0560">Oxidoreductase</keyword>
<keyword id="KW-0575">Peroxidase</keyword>
<keyword id="KW-1185">Reference proteome</keyword>
<keyword id="KW-0964">Secreted</keyword>
<keyword id="KW-0732">Signal</keyword>